<proteinExistence type="evidence at protein level"/>
<protein>
    <recommendedName>
        <fullName evidence="4 5">Fungal defensin copsin</fullName>
    </recommendedName>
</protein>
<feature type="signal peptide" evidence="1">
    <location>
        <begin position="1"/>
        <end position="23"/>
    </location>
</feature>
<feature type="propeptide" id="PRO_0000449383" evidence="2">
    <location>
        <begin position="24"/>
        <end position="127"/>
    </location>
</feature>
<feature type="chain" id="PRO_5001931724" description="Fungal defensin copsin">
    <location>
        <begin position="128"/>
        <end position="184"/>
    </location>
</feature>
<feature type="modified residue" description="Pyrrolidone carboxylic acid" evidence="2">
    <location>
        <position position="128"/>
    </location>
</feature>
<feature type="disulfide bond" evidence="2 9">
    <location>
        <begin position="130"/>
        <end position="159"/>
    </location>
</feature>
<feature type="disulfide bond" evidence="2 9">
    <location>
        <begin position="137"/>
        <end position="167"/>
    </location>
</feature>
<feature type="disulfide bond" evidence="2 9">
    <location>
        <begin position="145"/>
        <end position="175"/>
    </location>
</feature>
<feature type="disulfide bond" evidence="2 9">
    <location>
        <begin position="149"/>
        <end position="177"/>
    </location>
</feature>
<feature type="disulfide bond" evidence="2 9">
    <location>
        <begin position="152"/>
        <end position="184"/>
    </location>
</feature>
<feature type="disulfide bond" evidence="2 9">
    <location>
        <begin position="162"/>
        <end position="181"/>
    </location>
</feature>
<feature type="mutagenesis site" description="Increase in antibacterial activity against both B.subtilis and S.aureus. In k-copsin; important increase in antibacterial activity against both B.subtilis and S.aureus, which is due to a different and stronger interaction with bacterial membranes." evidence="3">
    <original>S</original>
    <variation>H</variation>
    <location>
        <position position="140"/>
    </location>
</feature>
<feature type="mutagenesis site" description="Increase in antibacterial activity against both B.subtilis and S.aureus. In k-copsin; important increase in antibacterial activity against both B.subtilis and S.aureus, which is due to a different and stronger interaction with bacterial membranes." evidence="3">
    <original>T</original>
    <variation>H</variation>
    <location>
        <position position="143"/>
    </location>
</feature>
<feature type="mutagenesis site" description="No change in activity against S.aureus, but increase in activity against B.subtilis. In k-copsin; important increase in antibacterial activity against both B.subtilis and S.aureus, which is due to a different and stronger interaction with bacterial membranes." evidence="3">
    <original>T</original>
    <variation>G</variation>
    <location>
        <position position="168"/>
    </location>
</feature>
<feature type="mutagenesis site" description="No change in activity against S.aureus, but increase in activity against B.subtilis. In k-copsin; important increase in antibacterial activity against both B.subtilis and S.aureus, which is due to a different and stronger interaction with bacterial membranes." evidence="3">
    <original>T</original>
    <variation>H</variation>
    <location>
        <position position="173"/>
    </location>
</feature>
<keyword id="KW-0002">3D-structure</keyword>
<keyword id="KW-0044">Antibiotic</keyword>
<keyword id="KW-0929">Antimicrobial</keyword>
<keyword id="KW-0165">Cleavage on pair of basic residues</keyword>
<keyword id="KW-0211">Defensin</keyword>
<keyword id="KW-0903">Direct protein sequencing</keyword>
<keyword id="KW-1015">Disulfide bond</keyword>
<keyword id="KW-0446">Lipid-binding</keyword>
<keyword id="KW-0472">Membrane</keyword>
<keyword id="KW-0873">Pyrrolidone carboxylic acid</keyword>
<keyword id="KW-0964">Secreted</keyword>
<keyword id="KW-0732">Signal</keyword>
<keyword id="KW-1052">Target cell membrane</keyword>
<keyword id="KW-1053">Target membrane</keyword>
<sequence>MKLSTSLLAIVAVASTFIGNALSATTVPGCFAECIDKAAVAVNCAAGDIDCLQASSQFATIVSECVATSDCTALSPGSASDADSINKTFNILSGLGFIDEADAFSAADVPEERDLTGLGRVLPVEKRQNCPTRRGLCVTSGLTACRNHCRSCHRGDVGCVRCSNAQCTGFLGTTCTCINPCPRC</sequence>
<reference evidence="8" key="1">
    <citation type="journal article" date="2014" name="J. Biol. Chem.">
        <title>Copsin, a novel peptide-based fungal antibiotic interfering with the peptidoglycan synthesis.</title>
        <authorList>
            <person name="Essig A."/>
            <person name="Hofmann D."/>
            <person name="Munch D."/>
            <person name="Gayathri S."/>
            <person name="Kunzler M."/>
            <person name="Kallio P.T."/>
            <person name="Sahl H.G."/>
            <person name="Wider G."/>
            <person name="Schneider T."/>
            <person name="Aebi M."/>
        </authorList>
    </citation>
    <scope>NUCLEOTIDE SEQUENCE [MRNA]</scope>
    <scope>PARTIAL PROTEIN SEQUENCE</scope>
    <scope>STRUCTURE BY NMR OF 131-186</scope>
    <scope>FUNCTION</scope>
    <scope>DISULFIDE BONDS</scope>
    <scope>PYROGLUTAMATE FORMATION AT GLN-128</scope>
    <scope>SUBCELLULAR LOCATION</scope>
    <scope>BIOPHYSICOCHEMICAL PROPERTIES</scope>
    <source>
        <strain>AmutBmut</strain>
    </source>
</reference>
<reference key="2">
    <citation type="journal article" date="2017" name="Biochemistry">
        <title>Structural insights into the mode of action of the peptide antibiotic copsin.</title>
        <authorList>
            <person name="Franzoi M."/>
            <person name="van Heuvel Y."/>
            <person name="Thomann S."/>
            <person name="Schuerch N."/>
            <person name="Kallio P.T."/>
            <person name="Venier P."/>
            <person name="Essig A."/>
        </authorList>
    </citation>
    <scope>FUNCTION</scope>
    <scope>MUTAGENESIS OF SER-140; THR-143; THR-168 AND THR-173</scope>
    <scope>MEMBRANE-BINDING SIMULATION</scope>
</reference>
<accession>A0A097PTA8</accession>
<organism>
    <name type="scientific">Coprinopsis cinerea</name>
    <name type="common">Inky cap fungus</name>
    <name type="synonym">Hormographiella aspergillata</name>
    <dbReference type="NCBI Taxonomy" id="5346"/>
    <lineage>
        <taxon>Eukaryota</taxon>
        <taxon>Fungi</taxon>
        <taxon>Dikarya</taxon>
        <taxon>Basidiomycota</taxon>
        <taxon>Agaricomycotina</taxon>
        <taxon>Agaricomycetes</taxon>
        <taxon>Agaricomycetidae</taxon>
        <taxon>Agaricales</taxon>
        <taxon>Agaricineae</taxon>
        <taxon>Psathyrellaceae</taxon>
        <taxon>Coprinopsis</taxon>
    </lineage>
</organism>
<name>DEFCO_COPCI</name>
<dbReference type="EMBL" id="KM274935">
    <property type="protein sequence ID" value="AIU55999.1"/>
    <property type="molecule type" value="mRNA"/>
</dbReference>
<dbReference type="PDB" id="2MN5">
    <property type="method" value="NMR"/>
    <property type="chains" value="A=128-184"/>
</dbReference>
<dbReference type="PDBsum" id="2MN5"/>
<dbReference type="SMR" id="A0A097PTA8"/>
<dbReference type="VEuPathDB" id="FungiDB:CC1G_13813"/>
<dbReference type="VEuPathDB" id="FungiDB:CC2G_005004"/>
<dbReference type="GO" id="GO:0005576">
    <property type="term" value="C:extracellular region"/>
    <property type="evidence" value="ECO:0007669"/>
    <property type="project" value="UniProtKB-SubCell"/>
</dbReference>
<dbReference type="GO" id="GO:0016020">
    <property type="term" value="C:membrane"/>
    <property type="evidence" value="ECO:0007669"/>
    <property type="project" value="UniProtKB-KW"/>
</dbReference>
<dbReference type="GO" id="GO:0044218">
    <property type="term" value="C:other organism cell membrane"/>
    <property type="evidence" value="ECO:0007669"/>
    <property type="project" value="UniProtKB-KW"/>
</dbReference>
<dbReference type="GO" id="GO:0008289">
    <property type="term" value="F:lipid binding"/>
    <property type="evidence" value="ECO:0007669"/>
    <property type="project" value="UniProtKB-KW"/>
</dbReference>
<dbReference type="GO" id="GO:0042742">
    <property type="term" value="P:defense response to bacterium"/>
    <property type="evidence" value="ECO:0007669"/>
    <property type="project" value="UniProtKB-KW"/>
</dbReference>
<dbReference type="Gene3D" id="3.30.30.140">
    <property type="match status" value="1"/>
</dbReference>
<dbReference type="InterPro" id="IPR041284">
    <property type="entry name" value="Copsin"/>
</dbReference>
<dbReference type="Pfam" id="PF18251">
    <property type="entry name" value="Defensin_5"/>
    <property type="match status" value="1"/>
</dbReference>
<comment type="function">
    <text evidence="2 3">Antimicrobial peptide that acts against Gram-positive bacteria (Listeria spp., Enterococcus spp., B.subtilis, B.anthracis, P.aeruginosa) (PubMed:25342741, PubMed:28825809). Is not active against Gram-negative bacteria (PubMed:25342741). It selectively inhibits peptidoglycan biosynthesis through complex formation with the cell wall precursor lipid II (1:1 molar ratio), probably anchoring lipid II to the membrane, thus inhibiting cell wall synthesis (PubMed:25342741, PubMed:28825809). The interaction with lipid II involves the third position of the pentapeptide (PubMed:25342741). Shows bactericidal activity at about 2-fold minimal inhibitory concentrations (MIC), but does not form pore across the membrane (PubMed:25342741).</text>
</comment>
<comment type="biophysicochemical properties">
    <phDependence>
        <text evidence="2">Optimum pH is 1-8.</text>
    </phDependence>
    <temperatureDependence>
        <text evidence="2">Optimum temperature is 4-90 degrees Celsius.</text>
    </temperatureDependence>
</comment>
<comment type="subcellular location">
    <subcellularLocation>
        <location evidence="2 7">Secreted</location>
    </subcellularLocation>
    <subcellularLocation>
        <location evidence="2 7">Target cell membrane</location>
    </subcellularLocation>
    <text evidence="2">specific localization at active cell wall synthesis sites.</text>
</comment>
<comment type="PTM">
    <text evidence="6">Contains a unique connectivity of 6 cysteine bonds in contrast to most other CS-alpha-beta defensins which are linked by 3 or 4 disulfide bonds.</text>
</comment>
<comment type="PTM">
    <text evidence="2">Disulfide bonds are essential for structural integrity and antibacterial activity, since activity is lost after treatment with reducing agents. Thanks to disulfide bonds and N-terminal pyroglutamate, the protein is extremely stable in a wide pH and temperature range and insensitive toward proteases.</text>
</comment>
<comment type="similarity">
    <text evidence="6">Belongs to the invertebrate defensin family.</text>
</comment>
<comment type="online information" name="The antimicrobial peptide database">
    <link uri="https://wangapd3.com/database/query_output.php?ID=02440"/>
</comment>
<evidence type="ECO:0000255" key="1"/>
<evidence type="ECO:0000269" key="2">
    <source>
    </source>
</evidence>
<evidence type="ECO:0000269" key="3">
    <source>
    </source>
</evidence>
<evidence type="ECO:0000303" key="4">
    <source>
    </source>
</evidence>
<evidence type="ECO:0000303" key="5">
    <source>
    </source>
</evidence>
<evidence type="ECO:0000305" key="6"/>
<evidence type="ECO:0000305" key="7">
    <source>
    </source>
</evidence>
<evidence type="ECO:0000312" key="8">
    <source>
        <dbReference type="PDB" id="2MN5"/>
    </source>
</evidence>
<evidence type="ECO:0007744" key="9">
    <source>
        <dbReference type="PDB" id="2MN5"/>
    </source>
</evidence>